<protein>
    <recommendedName>
        <fullName evidence="1">DNA-directed RNA polymerase subunit beta'</fullName>
        <shortName evidence="1">RNAP subunit beta'</shortName>
        <ecNumber evidence="1">2.7.7.6</ecNumber>
    </recommendedName>
    <alternativeName>
        <fullName evidence="1">RNA polymerase subunit beta'</fullName>
    </alternativeName>
    <alternativeName>
        <fullName evidence="1">Transcriptase subunit beta'</fullName>
    </alternativeName>
</protein>
<keyword id="KW-0240">DNA-directed RNA polymerase</keyword>
<keyword id="KW-0460">Magnesium</keyword>
<keyword id="KW-0479">Metal-binding</keyword>
<keyword id="KW-0548">Nucleotidyltransferase</keyword>
<keyword id="KW-1185">Reference proteome</keyword>
<keyword id="KW-0804">Transcription</keyword>
<keyword id="KW-0808">Transferase</keyword>
<keyword id="KW-0862">Zinc</keyword>
<comment type="function">
    <text evidence="1">DNA-dependent RNA polymerase catalyzes the transcription of DNA into RNA using the four ribonucleoside triphosphates as substrates.</text>
</comment>
<comment type="catalytic activity">
    <reaction evidence="1">
        <text>RNA(n) + a ribonucleoside 5'-triphosphate = RNA(n+1) + diphosphate</text>
        <dbReference type="Rhea" id="RHEA:21248"/>
        <dbReference type="Rhea" id="RHEA-COMP:14527"/>
        <dbReference type="Rhea" id="RHEA-COMP:17342"/>
        <dbReference type="ChEBI" id="CHEBI:33019"/>
        <dbReference type="ChEBI" id="CHEBI:61557"/>
        <dbReference type="ChEBI" id="CHEBI:140395"/>
        <dbReference type="EC" id="2.7.7.6"/>
    </reaction>
</comment>
<comment type="cofactor">
    <cofactor evidence="1">
        <name>Mg(2+)</name>
        <dbReference type="ChEBI" id="CHEBI:18420"/>
    </cofactor>
    <text evidence="1">Binds 1 Mg(2+) ion per subunit.</text>
</comment>
<comment type="cofactor">
    <cofactor evidence="1">
        <name>Zn(2+)</name>
        <dbReference type="ChEBI" id="CHEBI:29105"/>
    </cofactor>
    <text evidence="2">Binds 1 Zn(2+) ion per subunit; 2 are expected compared to other organisms.</text>
</comment>
<comment type="subunit">
    <text evidence="1">The RNAP catalytic core consists of 2 alpha, 1 beta, 1 beta' and 1 omega subunit. When a sigma factor is associated with the core the holoenzyme is formed, which can initiate transcription.</text>
</comment>
<comment type="similarity">
    <text evidence="1 2">Belongs to the RNA polymerase beta' chain family.</text>
</comment>
<proteinExistence type="inferred from homology"/>
<evidence type="ECO:0000255" key="1">
    <source>
        <dbReference type="HAMAP-Rule" id="MF_01322"/>
    </source>
</evidence>
<evidence type="ECO:0000305" key="2"/>
<reference key="1">
    <citation type="journal article" date="2011" name="J. Bacteriol.">
        <title>Complete genome and proteome of Acholeplasma laidlawii.</title>
        <authorList>
            <person name="Lazarev V.N."/>
            <person name="Levitskii S.A."/>
            <person name="Basovskii Y.I."/>
            <person name="Chukin M.M."/>
            <person name="Akopian T.A."/>
            <person name="Vereshchagin V.V."/>
            <person name="Kostrjukova E.S."/>
            <person name="Kovaleva G.Y."/>
            <person name="Kazanov M.D."/>
            <person name="Malko D.B."/>
            <person name="Vitreschak A.G."/>
            <person name="Sernova N.V."/>
            <person name="Gelfand M.S."/>
            <person name="Demina I.A."/>
            <person name="Serebryakova M.V."/>
            <person name="Galyamina M.A."/>
            <person name="Vtyurin N.N."/>
            <person name="Rogov S.I."/>
            <person name="Alexeev D.G."/>
            <person name="Ladygina V.G."/>
            <person name="Govorun V.M."/>
        </authorList>
    </citation>
    <scope>NUCLEOTIDE SEQUENCE [LARGE SCALE GENOMIC DNA]</scope>
    <source>
        <strain>PG-8A</strain>
    </source>
</reference>
<accession>A9NEL8</accession>
<sequence length="1375" mass="155620">MAKNEVLSLPVDSLKLSQTALDRLKLSGISRLEDFNTFNLKELQMLLSDSFNEVLPTLIYYKLPRDVRDLSLSDEVVSVLETAGIKDLEALTKYDKSTLYHVFKDDEFLLKEINDLFELYHEEKLSTLNVATEVFEEVALPQEVSVEDRVNKIIQPIRKTYGSKAFTHFKVRLASPDEIRNWSYGEVINHETINYRTSKPEPGGLFDERIFGPTRDYQCACGKKQTVNKGQICPKCGIEITESKVRRERMGHINLEAPVVHTWYLKNSPSRLAILLGIKAKQLEEVVYHASYIVTDPGQNTPLAKKQILSEQDYSLLVEEYGSRFTALTGAEAVKKLLQDLDLDKEVKNLRKRLKTSSKQKRDRIIKRLDVVEAFNQSDNKPEWMVMDVIPVIPPDLRPMVPLDGGRFATTDLNDLYRRILNRNNRLKKQKEQMAPRLITKNEKRMLQEAVDALFDNAKRGKKAAVERNRHLKSLSDLLRGKQGRFRQNLLGKRVDYSGRSVIIVGPDLEMYQCGIPREMAITLFKPFILRELQLTHGAEKKNANAKYERRDDDTWRALEKVVREHPVLLNRAPTLHRLGIQAFEVKLIDGKAIRLHPLVTPAFNADFDGDQMAVHLPLSPEAQAEARLLMLASNNILNPRDGKPVVTPSQDMVLGNYYLTIEESKDRNFGDDLERTKKHQEKHRHEGKFFSSIDEVKIAYENKDISLHTRIIIKPESVKDTFTVEQKNMYLVTTLGKIIFNEILPETFPYVNEPTMSNLSEKTPDIYFIKKGVNPKDALKHIPTPEPFKKRFLSMVIAQVFKLFHISETSRMLDKLKDLGFKYSTVAGITISYADINVYSKKKEMVEATEEEINEIEEWFEDGLLTDSERRKLVIDKWTNVKNEIQSGIMKEFDKDNNIFMMSDSGARGNVSNFTQLVGMRGLMSNPKGETIEVPVQSSFREGLTVSEFFISTHGARKGSTDTALKTAESGYLTRRLVDVSQDVIIVEDDCGSSHGVYVEAIKDESGKEIVPLYDRIYGRFAAHDIISPKTGEVFVKRNELITEEIGLAIVKSGMQKVEIRSIMTCTSSHGICAKDYGINLATNQFVEVGEAIGVVAAQSIGEPGTQLTMRTFHTGGVAAGADITQGLPRIQELFEARNPKGKATISEVEGKVKDISRRGGSISITITDTQGTEYKYTLDPNIEALVKKGQDVVAGQKLSSGSINPKELLRVTDVKTASNYILEEVQKVYRAQGVEISDKHVEVIIRQMLRRIMVIIEGDTNILPGTEVSIDEFKRENKEVLKNRGRLAVGRPILLGITRASLRSDSFLSAASFQETTRILTDAAIRSKKDELHGLKENVIIGGLIPAGTGILQEKFFHYDQPEDKKPIYDDFE</sequence>
<name>RPOC_ACHLI</name>
<dbReference type="EC" id="2.7.7.6" evidence="1"/>
<dbReference type="EMBL" id="CP000896">
    <property type="protein sequence ID" value="ABX80798.1"/>
    <property type="molecule type" value="Genomic_DNA"/>
</dbReference>
<dbReference type="RefSeq" id="WP_012242129.1">
    <property type="nucleotide sequence ID" value="NC_010163.1"/>
</dbReference>
<dbReference type="SMR" id="A9NEL8"/>
<dbReference type="STRING" id="441768.ACL_0172"/>
<dbReference type="GeneID" id="41338365"/>
<dbReference type="KEGG" id="acl:ACL_0172"/>
<dbReference type="eggNOG" id="COG0086">
    <property type="taxonomic scope" value="Bacteria"/>
</dbReference>
<dbReference type="HOGENOM" id="CLU_000524_3_1_14"/>
<dbReference type="OrthoDB" id="9815296at2"/>
<dbReference type="Proteomes" id="UP000008558">
    <property type="component" value="Chromosome"/>
</dbReference>
<dbReference type="GO" id="GO:0000428">
    <property type="term" value="C:DNA-directed RNA polymerase complex"/>
    <property type="evidence" value="ECO:0007669"/>
    <property type="project" value="UniProtKB-KW"/>
</dbReference>
<dbReference type="GO" id="GO:0003677">
    <property type="term" value="F:DNA binding"/>
    <property type="evidence" value="ECO:0007669"/>
    <property type="project" value="UniProtKB-UniRule"/>
</dbReference>
<dbReference type="GO" id="GO:0003899">
    <property type="term" value="F:DNA-directed RNA polymerase activity"/>
    <property type="evidence" value="ECO:0007669"/>
    <property type="project" value="UniProtKB-UniRule"/>
</dbReference>
<dbReference type="GO" id="GO:0000287">
    <property type="term" value="F:magnesium ion binding"/>
    <property type="evidence" value="ECO:0007669"/>
    <property type="project" value="UniProtKB-UniRule"/>
</dbReference>
<dbReference type="GO" id="GO:0008270">
    <property type="term" value="F:zinc ion binding"/>
    <property type="evidence" value="ECO:0007669"/>
    <property type="project" value="UniProtKB-UniRule"/>
</dbReference>
<dbReference type="GO" id="GO:0006351">
    <property type="term" value="P:DNA-templated transcription"/>
    <property type="evidence" value="ECO:0007669"/>
    <property type="project" value="UniProtKB-UniRule"/>
</dbReference>
<dbReference type="CDD" id="cd02655">
    <property type="entry name" value="RNAP_beta'_C"/>
    <property type="match status" value="1"/>
</dbReference>
<dbReference type="CDD" id="cd01609">
    <property type="entry name" value="RNAP_beta'_N"/>
    <property type="match status" value="1"/>
</dbReference>
<dbReference type="Gene3D" id="1.10.132.30">
    <property type="match status" value="1"/>
</dbReference>
<dbReference type="Gene3D" id="1.10.150.390">
    <property type="match status" value="1"/>
</dbReference>
<dbReference type="Gene3D" id="1.10.1790.20">
    <property type="match status" value="1"/>
</dbReference>
<dbReference type="Gene3D" id="1.10.40.90">
    <property type="match status" value="1"/>
</dbReference>
<dbReference type="Gene3D" id="2.40.40.20">
    <property type="match status" value="1"/>
</dbReference>
<dbReference type="Gene3D" id="2.40.50.100">
    <property type="match status" value="1"/>
</dbReference>
<dbReference type="Gene3D" id="4.10.860.120">
    <property type="entry name" value="RNA polymerase II, clamp domain"/>
    <property type="match status" value="1"/>
</dbReference>
<dbReference type="Gene3D" id="1.10.274.100">
    <property type="entry name" value="RNA polymerase Rpb1, domain 3"/>
    <property type="match status" value="2"/>
</dbReference>
<dbReference type="HAMAP" id="MF_01322">
    <property type="entry name" value="RNApol_bact_RpoC"/>
    <property type="match status" value="1"/>
</dbReference>
<dbReference type="InterPro" id="IPR045867">
    <property type="entry name" value="DNA-dir_RpoC_beta_prime"/>
</dbReference>
<dbReference type="InterPro" id="IPR012754">
    <property type="entry name" value="DNA-dir_RpoC_beta_prime_bact"/>
</dbReference>
<dbReference type="InterPro" id="IPR000722">
    <property type="entry name" value="RNA_pol_asu"/>
</dbReference>
<dbReference type="InterPro" id="IPR006592">
    <property type="entry name" value="RNA_pol_N"/>
</dbReference>
<dbReference type="InterPro" id="IPR007080">
    <property type="entry name" value="RNA_pol_Rpb1_1"/>
</dbReference>
<dbReference type="InterPro" id="IPR007066">
    <property type="entry name" value="RNA_pol_Rpb1_3"/>
</dbReference>
<dbReference type="InterPro" id="IPR042102">
    <property type="entry name" value="RNA_pol_Rpb1_3_sf"/>
</dbReference>
<dbReference type="InterPro" id="IPR007083">
    <property type="entry name" value="RNA_pol_Rpb1_4"/>
</dbReference>
<dbReference type="InterPro" id="IPR007081">
    <property type="entry name" value="RNA_pol_Rpb1_5"/>
</dbReference>
<dbReference type="InterPro" id="IPR044893">
    <property type="entry name" value="RNA_pol_Rpb1_clamp_domain"/>
</dbReference>
<dbReference type="InterPro" id="IPR038120">
    <property type="entry name" value="Rpb1_funnel_sf"/>
</dbReference>
<dbReference type="NCBIfam" id="TIGR02386">
    <property type="entry name" value="rpoC_TIGR"/>
    <property type="match status" value="1"/>
</dbReference>
<dbReference type="PANTHER" id="PTHR19376">
    <property type="entry name" value="DNA-DIRECTED RNA POLYMERASE"/>
    <property type="match status" value="1"/>
</dbReference>
<dbReference type="PANTHER" id="PTHR19376:SF54">
    <property type="entry name" value="DNA-DIRECTED RNA POLYMERASE SUBUNIT BETA"/>
    <property type="match status" value="1"/>
</dbReference>
<dbReference type="Pfam" id="PF04997">
    <property type="entry name" value="RNA_pol_Rpb1_1"/>
    <property type="match status" value="1"/>
</dbReference>
<dbReference type="Pfam" id="PF00623">
    <property type="entry name" value="RNA_pol_Rpb1_2"/>
    <property type="match status" value="1"/>
</dbReference>
<dbReference type="Pfam" id="PF04983">
    <property type="entry name" value="RNA_pol_Rpb1_3"/>
    <property type="match status" value="1"/>
</dbReference>
<dbReference type="Pfam" id="PF05000">
    <property type="entry name" value="RNA_pol_Rpb1_4"/>
    <property type="match status" value="1"/>
</dbReference>
<dbReference type="Pfam" id="PF04998">
    <property type="entry name" value="RNA_pol_Rpb1_5"/>
    <property type="match status" value="1"/>
</dbReference>
<dbReference type="SMART" id="SM00663">
    <property type="entry name" value="RPOLA_N"/>
    <property type="match status" value="1"/>
</dbReference>
<dbReference type="SUPFAM" id="SSF64484">
    <property type="entry name" value="beta and beta-prime subunits of DNA dependent RNA-polymerase"/>
    <property type="match status" value="1"/>
</dbReference>
<organism>
    <name type="scientific">Acholeplasma laidlawii (strain PG-8A)</name>
    <dbReference type="NCBI Taxonomy" id="441768"/>
    <lineage>
        <taxon>Bacteria</taxon>
        <taxon>Bacillati</taxon>
        <taxon>Mycoplasmatota</taxon>
        <taxon>Mollicutes</taxon>
        <taxon>Acholeplasmatales</taxon>
        <taxon>Acholeplasmataceae</taxon>
        <taxon>Acholeplasma</taxon>
    </lineage>
</organism>
<feature type="chain" id="PRO_0000353468" description="DNA-directed RNA polymerase subunit beta'">
    <location>
        <begin position="1"/>
        <end position="1375"/>
    </location>
</feature>
<feature type="region of interest" description="Unknown">
    <location>
        <begin position="1"/>
        <end position="158"/>
    </location>
</feature>
<feature type="region of interest" description="DNA-directed RNA polymerase subunit beta'">
    <location>
        <begin position="159"/>
        <end position="1353"/>
    </location>
</feature>
<feature type="binding site" evidence="1">
    <location>
        <position position="219"/>
    </location>
    <ligand>
        <name>Zn(2+)</name>
        <dbReference type="ChEBI" id="CHEBI:29105"/>
    </ligand>
</feature>
<feature type="binding site" evidence="1">
    <location>
        <position position="221"/>
    </location>
    <ligand>
        <name>Zn(2+)</name>
        <dbReference type="ChEBI" id="CHEBI:29105"/>
    </ligand>
</feature>
<feature type="binding site" evidence="1">
    <location>
        <position position="233"/>
    </location>
    <ligand>
        <name>Zn(2+)</name>
        <dbReference type="ChEBI" id="CHEBI:29105"/>
    </ligand>
</feature>
<feature type="binding site" evidence="1">
    <location>
        <position position="236"/>
    </location>
    <ligand>
        <name>Zn(2+)</name>
        <dbReference type="ChEBI" id="CHEBI:29105"/>
    </ligand>
</feature>
<feature type="binding site" evidence="1">
    <location>
        <position position="607"/>
    </location>
    <ligand>
        <name>Mg(2+)</name>
        <dbReference type="ChEBI" id="CHEBI:18420"/>
    </ligand>
</feature>
<feature type="binding site" evidence="1">
    <location>
        <position position="609"/>
    </location>
    <ligand>
        <name>Mg(2+)</name>
        <dbReference type="ChEBI" id="CHEBI:18420"/>
    </ligand>
</feature>
<feature type="binding site" evidence="1">
    <location>
        <position position="611"/>
    </location>
    <ligand>
        <name>Mg(2+)</name>
        <dbReference type="ChEBI" id="CHEBI:18420"/>
    </ligand>
</feature>
<gene>
    <name evidence="1" type="primary">rpoC</name>
    <name type="ordered locus">ACL_0172</name>
</gene>